<reference key="1">
    <citation type="submission" date="2007-10" db="EMBL/GenBank/DDBJ databases">
        <title>Complete sequence of chromosome 2 of Burkholderia multivorans ATCC 17616.</title>
        <authorList>
            <person name="Copeland A."/>
            <person name="Lucas S."/>
            <person name="Lapidus A."/>
            <person name="Barry K."/>
            <person name="Glavina del Rio T."/>
            <person name="Dalin E."/>
            <person name="Tice H."/>
            <person name="Pitluck S."/>
            <person name="Chain P."/>
            <person name="Malfatti S."/>
            <person name="Shin M."/>
            <person name="Vergez L."/>
            <person name="Schmutz J."/>
            <person name="Larimer F."/>
            <person name="Land M."/>
            <person name="Hauser L."/>
            <person name="Kyrpides N."/>
            <person name="Kim E."/>
            <person name="Tiedje J."/>
            <person name="Richardson P."/>
        </authorList>
    </citation>
    <scope>NUCLEOTIDE SEQUENCE [LARGE SCALE GENOMIC DNA]</scope>
    <source>
        <strain>ATCC 17616 / 249</strain>
    </source>
</reference>
<reference key="2">
    <citation type="submission" date="2007-04" db="EMBL/GenBank/DDBJ databases">
        <title>Complete genome sequence of Burkholderia multivorans ATCC 17616.</title>
        <authorList>
            <person name="Ohtsubo Y."/>
            <person name="Yamashita A."/>
            <person name="Kurokawa K."/>
            <person name="Takami H."/>
            <person name="Yuhara S."/>
            <person name="Nishiyama E."/>
            <person name="Endo R."/>
            <person name="Miyazaki R."/>
            <person name="Ono A."/>
            <person name="Yano K."/>
            <person name="Ito M."/>
            <person name="Sota M."/>
            <person name="Yuji N."/>
            <person name="Hattori M."/>
            <person name="Tsuda M."/>
        </authorList>
    </citation>
    <scope>NUCLEOTIDE SEQUENCE [LARGE SCALE GENOMIC DNA]</scope>
    <source>
        <strain>ATCC 17616 / 249</strain>
    </source>
</reference>
<dbReference type="EC" id="2.7.1.39" evidence="1"/>
<dbReference type="EMBL" id="CP000869">
    <property type="protein sequence ID" value="ABX18549.1"/>
    <property type="molecule type" value="Genomic_DNA"/>
</dbReference>
<dbReference type="EMBL" id="AP009386">
    <property type="protein sequence ID" value="BAG45509.1"/>
    <property type="molecule type" value="Genomic_DNA"/>
</dbReference>
<dbReference type="RefSeq" id="WP_006399436.1">
    <property type="nucleotide sequence ID" value="NC_010805.1"/>
</dbReference>
<dbReference type="SMR" id="A9ANP0"/>
<dbReference type="STRING" id="395019.BMULJ_03637"/>
<dbReference type="KEGG" id="bmj:BMULJ_03637"/>
<dbReference type="KEGG" id="bmu:Bmul_4878"/>
<dbReference type="eggNOG" id="COG2334">
    <property type="taxonomic scope" value="Bacteria"/>
</dbReference>
<dbReference type="HOGENOM" id="CLU_053300_0_0_4"/>
<dbReference type="UniPathway" id="UPA00050">
    <property type="reaction ID" value="UER00064"/>
</dbReference>
<dbReference type="Proteomes" id="UP000008815">
    <property type="component" value="Chromosome 2"/>
</dbReference>
<dbReference type="GO" id="GO:0005524">
    <property type="term" value="F:ATP binding"/>
    <property type="evidence" value="ECO:0007669"/>
    <property type="project" value="UniProtKB-KW"/>
</dbReference>
<dbReference type="GO" id="GO:0004413">
    <property type="term" value="F:homoserine kinase activity"/>
    <property type="evidence" value="ECO:0007669"/>
    <property type="project" value="UniProtKB-UniRule"/>
</dbReference>
<dbReference type="GO" id="GO:0009088">
    <property type="term" value="P:threonine biosynthetic process"/>
    <property type="evidence" value="ECO:0007669"/>
    <property type="project" value="UniProtKB-UniRule"/>
</dbReference>
<dbReference type="CDD" id="cd05153">
    <property type="entry name" value="HomoserineK_II"/>
    <property type="match status" value="1"/>
</dbReference>
<dbReference type="Gene3D" id="3.90.1200.10">
    <property type="match status" value="1"/>
</dbReference>
<dbReference type="Gene3D" id="3.30.200.20">
    <property type="entry name" value="Phosphorylase Kinase, domain 1"/>
    <property type="match status" value="1"/>
</dbReference>
<dbReference type="HAMAP" id="MF_00301">
    <property type="entry name" value="Homoser_kinase_2"/>
    <property type="match status" value="1"/>
</dbReference>
<dbReference type="InterPro" id="IPR002575">
    <property type="entry name" value="Aminoglycoside_PTrfase"/>
</dbReference>
<dbReference type="InterPro" id="IPR005280">
    <property type="entry name" value="Homoserine_kinase_II"/>
</dbReference>
<dbReference type="InterPro" id="IPR011009">
    <property type="entry name" value="Kinase-like_dom_sf"/>
</dbReference>
<dbReference type="InterPro" id="IPR050249">
    <property type="entry name" value="Pseudomonas-type_ThrB"/>
</dbReference>
<dbReference type="NCBIfam" id="NF003558">
    <property type="entry name" value="PRK05231.1"/>
    <property type="match status" value="1"/>
</dbReference>
<dbReference type="NCBIfam" id="TIGR00938">
    <property type="entry name" value="thrB_alt"/>
    <property type="match status" value="1"/>
</dbReference>
<dbReference type="PANTHER" id="PTHR21064:SF6">
    <property type="entry name" value="AMINOGLYCOSIDE PHOSPHOTRANSFERASE DOMAIN-CONTAINING PROTEIN"/>
    <property type="match status" value="1"/>
</dbReference>
<dbReference type="PANTHER" id="PTHR21064">
    <property type="entry name" value="AMINOGLYCOSIDE PHOSPHOTRANSFERASE DOMAIN-CONTAINING PROTEIN-RELATED"/>
    <property type="match status" value="1"/>
</dbReference>
<dbReference type="Pfam" id="PF01636">
    <property type="entry name" value="APH"/>
    <property type="match status" value="1"/>
</dbReference>
<dbReference type="SUPFAM" id="SSF56112">
    <property type="entry name" value="Protein kinase-like (PK-like)"/>
    <property type="match status" value="1"/>
</dbReference>
<proteinExistence type="inferred from homology"/>
<protein>
    <recommendedName>
        <fullName evidence="1">Homoserine kinase</fullName>
        <shortName evidence="1">HK</shortName>
        <shortName evidence="1">HSK</shortName>
        <ecNumber evidence="1">2.7.1.39</ecNumber>
    </recommendedName>
</protein>
<organism>
    <name type="scientific">Burkholderia multivorans (strain ATCC 17616 / 249)</name>
    <dbReference type="NCBI Taxonomy" id="395019"/>
    <lineage>
        <taxon>Bacteria</taxon>
        <taxon>Pseudomonadati</taxon>
        <taxon>Pseudomonadota</taxon>
        <taxon>Betaproteobacteria</taxon>
        <taxon>Burkholderiales</taxon>
        <taxon>Burkholderiaceae</taxon>
        <taxon>Burkholderia</taxon>
        <taxon>Burkholderia cepacia complex</taxon>
    </lineage>
</organism>
<gene>
    <name evidence="1" type="primary">thrB</name>
    <name type="ordered locus">Bmul_4878</name>
    <name type="ordered locus">BMULJ_03637</name>
</gene>
<keyword id="KW-0028">Amino-acid biosynthesis</keyword>
<keyword id="KW-0067">ATP-binding</keyword>
<keyword id="KW-0418">Kinase</keyword>
<keyword id="KW-0547">Nucleotide-binding</keyword>
<keyword id="KW-1185">Reference proteome</keyword>
<keyword id="KW-0791">Threonine biosynthesis</keyword>
<keyword id="KW-0808">Transferase</keyword>
<comment type="catalytic activity">
    <reaction evidence="1">
        <text>L-homoserine + ATP = O-phospho-L-homoserine + ADP + H(+)</text>
        <dbReference type="Rhea" id="RHEA:13985"/>
        <dbReference type="ChEBI" id="CHEBI:15378"/>
        <dbReference type="ChEBI" id="CHEBI:30616"/>
        <dbReference type="ChEBI" id="CHEBI:57476"/>
        <dbReference type="ChEBI" id="CHEBI:57590"/>
        <dbReference type="ChEBI" id="CHEBI:456216"/>
        <dbReference type="EC" id="2.7.1.39"/>
    </reaction>
</comment>
<comment type="pathway">
    <text evidence="1">Amino-acid biosynthesis; L-threonine biosynthesis; L-threonine from L-aspartate: step 4/5.</text>
</comment>
<comment type="similarity">
    <text evidence="1">Belongs to the pseudomonas-type ThrB family.</text>
</comment>
<sequence>MAVFTAVSDSDLAQWMRHYALGDVVAFRGIPSGIENSNFFLTTTRGEYVLTIFEKLTAEQLPFYLDLMRHLAGHGVPVPDPVPRDDGALFGTLHGKPAAIVTKLDGAAELAPGVEHCIEVGQMLARMHLAGRDYPRRQPNLRSLPWWQENVPAIVPFVTDAQRALLEGELAHQARFFGSEDYAALPGGPCHCDLFRDNVLFAHAAPDTGHAVRLGGFFDFYFAGCDKWLFDVAVTVNDWCVDLATGVLDTARADALLRAYQTVRPFTAEERRHWSDMLRAGAYRFWVSRLYDFYLPRAAEMLKPHDPGHFERILRERIAHTPALPEIQTACN</sequence>
<accession>A9ANP0</accession>
<name>KHSE_BURM1</name>
<evidence type="ECO:0000255" key="1">
    <source>
        <dbReference type="HAMAP-Rule" id="MF_00301"/>
    </source>
</evidence>
<feature type="chain" id="PRO_1000115428" description="Homoserine kinase">
    <location>
        <begin position="1"/>
        <end position="332"/>
    </location>
</feature>